<evidence type="ECO:0000255" key="1">
    <source>
        <dbReference type="HAMAP-Rule" id="MF_01963"/>
    </source>
</evidence>
<comment type="function">
    <text evidence="1">Purine nucleoside phosphorylase involved in purine salvage.</text>
</comment>
<comment type="catalytic activity">
    <reaction evidence="1">
        <text>a purine D-ribonucleoside + phosphate = a purine nucleobase + alpha-D-ribose 1-phosphate</text>
        <dbReference type="Rhea" id="RHEA:19805"/>
        <dbReference type="ChEBI" id="CHEBI:26386"/>
        <dbReference type="ChEBI" id="CHEBI:43474"/>
        <dbReference type="ChEBI" id="CHEBI:57720"/>
        <dbReference type="ChEBI" id="CHEBI:142355"/>
        <dbReference type="EC" id="2.4.2.1"/>
    </reaction>
</comment>
<comment type="pathway">
    <text evidence="1">Purine metabolism; purine nucleoside salvage.</text>
</comment>
<comment type="subunit">
    <text evidence="1">Homohexamer. Dimer of a homotrimer.</text>
</comment>
<comment type="miscellaneous">
    <text evidence="1">Although this enzyme belongs to the family of MTA phosphorylases based on sequence homology, it lacks several conserved amino acids in the substrate binding pocket that confer specificity towards MTA.</text>
</comment>
<comment type="similarity">
    <text evidence="1">Belongs to the PNP/MTAP phosphorylase family. MTAP subfamily.</text>
</comment>
<accession>Q9KYV7</accession>
<proteinExistence type="inferred from homology"/>
<name>PNPH_STRCO</name>
<keyword id="KW-0328">Glycosyltransferase</keyword>
<keyword id="KW-0660">Purine salvage</keyword>
<keyword id="KW-1185">Reference proteome</keyword>
<keyword id="KW-0808">Transferase</keyword>
<sequence length="280" mass="29755">MANKVKAEIGVIGGSGFYSFLDDVTEVRVDTPYGPPSDSLFLGEVAGRRVAFLPRHGRGHHLPPHRINYRANLWALRSVGARQVLGPCAVGGLRPEYGPGTLLVPDQFVDRTRSRPSTYFDGLPMPDGTVPNVVHVSLADPYCPTGRAAALKAARGREWEPVDGGTLVVVEGPRFGTRAESLWHRAQGWSVVGMTGHPEAALARELELCYTSLTLVTDLDAGAESGEGVSHEEVLRVFAANVDRLRGVLFDAVAALPASGERDCPCGAALGGMDPGIALP</sequence>
<organism>
    <name type="scientific">Streptomyces coelicolor (strain ATCC BAA-471 / A3(2) / M145)</name>
    <dbReference type="NCBI Taxonomy" id="100226"/>
    <lineage>
        <taxon>Bacteria</taxon>
        <taxon>Bacillati</taxon>
        <taxon>Actinomycetota</taxon>
        <taxon>Actinomycetes</taxon>
        <taxon>Kitasatosporales</taxon>
        <taxon>Streptomycetaceae</taxon>
        <taxon>Streptomyces</taxon>
        <taxon>Streptomyces albidoflavus group</taxon>
    </lineage>
</organism>
<dbReference type="EC" id="2.4.2.1" evidence="1"/>
<dbReference type="EMBL" id="AL939115">
    <property type="protein sequence ID" value="CAB90972.1"/>
    <property type="molecule type" value="Genomic_DNA"/>
</dbReference>
<dbReference type="RefSeq" id="NP_627402.1">
    <property type="nucleotide sequence ID" value="NC_003888.3"/>
</dbReference>
<dbReference type="RefSeq" id="WP_003975629.1">
    <property type="nucleotide sequence ID" value="NZ_VNID01000013.1"/>
</dbReference>
<dbReference type="SMR" id="Q9KYV7"/>
<dbReference type="FunCoup" id="Q9KYV7">
    <property type="interactions" value="323"/>
</dbReference>
<dbReference type="STRING" id="100226.gene:17760806"/>
<dbReference type="PaxDb" id="100226-SCO3188"/>
<dbReference type="KEGG" id="sco:SCO3188"/>
<dbReference type="PATRIC" id="fig|100226.15.peg.3248"/>
<dbReference type="eggNOG" id="COG0005">
    <property type="taxonomic scope" value="Bacteria"/>
</dbReference>
<dbReference type="HOGENOM" id="CLU_054456_0_2_11"/>
<dbReference type="InParanoid" id="Q9KYV7"/>
<dbReference type="OrthoDB" id="1523230at2"/>
<dbReference type="PhylomeDB" id="Q9KYV7"/>
<dbReference type="UniPathway" id="UPA00606"/>
<dbReference type="Proteomes" id="UP000001973">
    <property type="component" value="Chromosome"/>
</dbReference>
<dbReference type="GO" id="GO:0005829">
    <property type="term" value="C:cytosol"/>
    <property type="evidence" value="ECO:0000318"/>
    <property type="project" value="GO_Central"/>
</dbReference>
<dbReference type="GO" id="GO:0017061">
    <property type="term" value="F:S-methyl-5-thioadenosine phosphorylase activity"/>
    <property type="evidence" value="ECO:0000318"/>
    <property type="project" value="GO_Central"/>
</dbReference>
<dbReference type="GO" id="GO:0019509">
    <property type="term" value="P:L-methionine salvage from methylthioadenosine"/>
    <property type="evidence" value="ECO:0000318"/>
    <property type="project" value="GO_Central"/>
</dbReference>
<dbReference type="GO" id="GO:0006166">
    <property type="term" value="P:purine ribonucleoside salvage"/>
    <property type="evidence" value="ECO:0007669"/>
    <property type="project" value="UniProtKB-UniRule"/>
</dbReference>
<dbReference type="CDD" id="cd09010">
    <property type="entry name" value="MTAP_SsMTAPII_like_MTIP"/>
    <property type="match status" value="1"/>
</dbReference>
<dbReference type="FunFam" id="3.40.50.1580:FF:000013">
    <property type="entry name" value="Purine nucleoside phosphorylase"/>
    <property type="match status" value="1"/>
</dbReference>
<dbReference type="Gene3D" id="3.40.50.1580">
    <property type="entry name" value="Nucleoside phosphorylase domain"/>
    <property type="match status" value="1"/>
</dbReference>
<dbReference type="HAMAP" id="MF_01963">
    <property type="entry name" value="MTAP"/>
    <property type="match status" value="1"/>
</dbReference>
<dbReference type="InterPro" id="IPR010044">
    <property type="entry name" value="MTAP"/>
</dbReference>
<dbReference type="InterPro" id="IPR000845">
    <property type="entry name" value="Nucleoside_phosphorylase_d"/>
</dbReference>
<dbReference type="InterPro" id="IPR035994">
    <property type="entry name" value="Nucleoside_phosphorylase_sf"/>
</dbReference>
<dbReference type="NCBIfam" id="TIGR01694">
    <property type="entry name" value="MTAP"/>
    <property type="match status" value="1"/>
</dbReference>
<dbReference type="NCBIfam" id="NF005876">
    <property type="entry name" value="PRK07823.1"/>
    <property type="match status" value="1"/>
</dbReference>
<dbReference type="NCBIfam" id="NF006599">
    <property type="entry name" value="PRK09136.1"/>
    <property type="match status" value="1"/>
</dbReference>
<dbReference type="PANTHER" id="PTHR42679">
    <property type="entry name" value="S-METHYL-5'-THIOADENOSINE PHOSPHORYLASE"/>
    <property type="match status" value="1"/>
</dbReference>
<dbReference type="PANTHER" id="PTHR42679:SF2">
    <property type="entry name" value="S-METHYL-5'-THIOADENOSINE PHOSPHORYLASE"/>
    <property type="match status" value="1"/>
</dbReference>
<dbReference type="Pfam" id="PF01048">
    <property type="entry name" value="PNP_UDP_1"/>
    <property type="match status" value="1"/>
</dbReference>
<dbReference type="SUPFAM" id="SSF53167">
    <property type="entry name" value="Purine and uridine phosphorylases"/>
    <property type="match status" value="1"/>
</dbReference>
<gene>
    <name type="ordered locus">SCO3188</name>
</gene>
<protein>
    <recommendedName>
        <fullName evidence="1">Purine nucleoside phosphorylase</fullName>
        <shortName evidence="1">PNP</shortName>
        <ecNumber evidence="1">2.4.2.1</ecNumber>
    </recommendedName>
</protein>
<reference key="1">
    <citation type="journal article" date="2002" name="Nature">
        <title>Complete genome sequence of the model actinomycete Streptomyces coelicolor A3(2).</title>
        <authorList>
            <person name="Bentley S.D."/>
            <person name="Chater K.F."/>
            <person name="Cerdeno-Tarraga A.-M."/>
            <person name="Challis G.L."/>
            <person name="Thomson N.R."/>
            <person name="James K.D."/>
            <person name="Harris D.E."/>
            <person name="Quail M.A."/>
            <person name="Kieser H."/>
            <person name="Harper D."/>
            <person name="Bateman A."/>
            <person name="Brown S."/>
            <person name="Chandra G."/>
            <person name="Chen C.W."/>
            <person name="Collins M."/>
            <person name="Cronin A."/>
            <person name="Fraser A."/>
            <person name="Goble A."/>
            <person name="Hidalgo J."/>
            <person name="Hornsby T."/>
            <person name="Howarth S."/>
            <person name="Huang C.-H."/>
            <person name="Kieser T."/>
            <person name="Larke L."/>
            <person name="Murphy L.D."/>
            <person name="Oliver K."/>
            <person name="O'Neil S."/>
            <person name="Rabbinowitsch E."/>
            <person name="Rajandream M.A."/>
            <person name="Rutherford K.M."/>
            <person name="Rutter S."/>
            <person name="Seeger K."/>
            <person name="Saunders D."/>
            <person name="Sharp S."/>
            <person name="Squares R."/>
            <person name="Squares S."/>
            <person name="Taylor K."/>
            <person name="Warren T."/>
            <person name="Wietzorrek A."/>
            <person name="Woodward J.R."/>
            <person name="Barrell B.G."/>
            <person name="Parkhill J."/>
            <person name="Hopwood D.A."/>
        </authorList>
    </citation>
    <scope>NUCLEOTIDE SEQUENCE [LARGE SCALE GENOMIC DNA]</scope>
    <source>
        <strain>ATCC BAA-471 / A3(2) / M145</strain>
    </source>
</reference>
<feature type="chain" id="PRO_0000415083" description="Purine nucleoside phosphorylase">
    <location>
        <begin position="1"/>
        <end position="280"/>
    </location>
</feature>
<feature type="binding site" evidence="1">
    <location>
        <position position="15"/>
    </location>
    <ligand>
        <name>phosphate</name>
        <dbReference type="ChEBI" id="CHEBI:43474"/>
    </ligand>
</feature>
<feature type="binding site" evidence="1">
    <location>
        <begin position="55"/>
        <end position="56"/>
    </location>
    <ligand>
        <name>phosphate</name>
        <dbReference type="ChEBI" id="CHEBI:43474"/>
    </ligand>
</feature>
<feature type="binding site" evidence="1">
    <location>
        <position position="194"/>
    </location>
    <ligand>
        <name>substrate</name>
    </ligand>
</feature>
<feature type="binding site" evidence="1">
    <location>
        <position position="195"/>
    </location>
    <ligand>
        <name>phosphate</name>
        <dbReference type="ChEBI" id="CHEBI:43474"/>
    </ligand>
</feature>
<feature type="binding site" evidence="1">
    <location>
        <begin position="218"/>
        <end position="220"/>
    </location>
    <ligand>
        <name>substrate</name>
    </ligand>
</feature>
<feature type="site" description="Important for substrate specificity" evidence="1">
    <location>
        <position position="231"/>
    </location>
</feature>